<organism>
    <name type="scientific">Listeria innocua serovar 6a (strain ATCC BAA-680 / CLIP 11262)</name>
    <dbReference type="NCBI Taxonomy" id="272626"/>
    <lineage>
        <taxon>Bacteria</taxon>
        <taxon>Bacillati</taxon>
        <taxon>Bacillota</taxon>
        <taxon>Bacilli</taxon>
        <taxon>Bacillales</taxon>
        <taxon>Listeriaceae</taxon>
        <taxon>Listeria</taxon>
    </lineage>
</organism>
<dbReference type="EMBL" id="AL596172">
    <property type="protein sequence ID" value="CAC97635.1"/>
    <property type="molecule type" value="Genomic_DNA"/>
</dbReference>
<dbReference type="PIR" id="AC1733">
    <property type="entry name" value="AC1733"/>
</dbReference>
<dbReference type="RefSeq" id="WP_010991169.1">
    <property type="nucleotide sequence ID" value="NC_003212.1"/>
</dbReference>
<dbReference type="SMR" id="Q928X3"/>
<dbReference type="STRING" id="272626.gene:17566769"/>
<dbReference type="KEGG" id="lin:lin2408"/>
<dbReference type="HOGENOM" id="CLU_2650102_0_0_9"/>
<dbReference type="Proteomes" id="UP000002513">
    <property type="component" value="Chromosome"/>
</dbReference>
<proteinExistence type="predicted"/>
<gene>
    <name type="ordered locus">lin2408</name>
</gene>
<evidence type="ECO:0000305" key="1"/>
<protein>
    <recommendedName>
        <fullName>Uncharacterized protein Lin2408</fullName>
    </recommendedName>
</protein>
<accession>Q928X3</accession>
<reference key="1">
    <citation type="journal article" date="2001" name="Science">
        <title>Comparative genomics of Listeria species.</title>
        <authorList>
            <person name="Glaser P."/>
            <person name="Frangeul L."/>
            <person name="Buchrieser C."/>
            <person name="Rusniok C."/>
            <person name="Amend A."/>
            <person name="Baquero F."/>
            <person name="Berche P."/>
            <person name="Bloecker H."/>
            <person name="Brandt P."/>
            <person name="Chakraborty T."/>
            <person name="Charbit A."/>
            <person name="Chetouani F."/>
            <person name="Couve E."/>
            <person name="de Daruvar A."/>
            <person name="Dehoux P."/>
            <person name="Domann E."/>
            <person name="Dominguez-Bernal G."/>
            <person name="Duchaud E."/>
            <person name="Durant L."/>
            <person name="Dussurget O."/>
            <person name="Entian K.-D."/>
            <person name="Fsihi H."/>
            <person name="Garcia-del Portillo F."/>
            <person name="Garrido P."/>
            <person name="Gautier L."/>
            <person name="Goebel W."/>
            <person name="Gomez-Lopez N."/>
            <person name="Hain T."/>
            <person name="Hauf J."/>
            <person name="Jackson D."/>
            <person name="Jones L.-M."/>
            <person name="Kaerst U."/>
            <person name="Kreft J."/>
            <person name="Kuhn M."/>
            <person name="Kunst F."/>
            <person name="Kurapkat G."/>
            <person name="Madueno E."/>
            <person name="Maitournam A."/>
            <person name="Mata Vicente J."/>
            <person name="Ng E."/>
            <person name="Nedjari H."/>
            <person name="Nordsiek G."/>
            <person name="Novella S."/>
            <person name="de Pablos B."/>
            <person name="Perez-Diaz J.-C."/>
            <person name="Purcell R."/>
            <person name="Remmel B."/>
            <person name="Rose M."/>
            <person name="Schlueter T."/>
            <person name="Simoes N."/>
            <person name="Tierrez A."/>
            <person name="Vazquez-Boland J.-A."/>
            <person name="Voss H."/>
            <person name="Wehland J."/>
            <person name="Cossart P."/>
        </authorList>
    </citation>
    <scope>NUCLEOTIDE SEQUENCE [LARGE SCALE GENOMIC DNA]</scope>
    <source>
        <strain>ATCC BAA-680 / CLIP 11262</strain>
    </source>
</reference>
<name>Y2408_LISIN</name>
<feature type="chain" id="PRO_0000210815" description="Uncharacterized protein Lin2408">
    <location>
        <begin position="1"/>
        <end position="76"/>
    </location>
</feature>
<sequence length="76" mass="9168">MRKNWTDEEIRVLQNNYEYVDTEIIANFLNRSYHSIKNKAVRLGISKNSVWTEDEDIYLEYFVYETTTILAKLPNF</sequence>
<comment type="similarity">
    <text evidence="1">To L.innocua lin1255, lin1742 and lin2600.</text>
</comment>